<protein>
    <recommendedName>
        <fullName evidence="1">Enolase</fullName>
        <ecNumber evidence="1">4.2.1.11</ecNumber>
    </recommendedName>
    <alternativeName>
        <fullName evidence="1">2-phospho-D-glycerate hydro-lyase</fullName>
    </alternativeName>
    <alternativeName>
        <fullName evidence="1">2-phosphoglycerate dehydratase</fullName>
    </alternativeName>
</protein>
<reference key="1">
    <citation type="journal article" date="2008" name="Proc. Natl. Acad. Sci. U.S.A.">
        <title>The genome sequence of Bifidobacterium longum subsp. infantis reveals adaptations for milk utilization within the infant microbiome.</title>
        <authorList>
            <person name="Sela D.A."/>
            <person name="Chapman J."/>
            <person name="Adeuya A."/>
            <person name="Kim J.H."/>
            <person name="Chen F."/>
            <person name="Whitehead T.R."/>
            <person name="Lapidus A."/>
            <person name="Rokhsar D.S."/>
            <person name="Lebrilla C.B."/>
            <person name="German J.B."/>
            <person name="Price N.P."/>
            <person name="Richardson P.M."/>
            <person name="Mills D.A."/>
        </authorList>
    </citation>
    <scope>NUCLEOTIDE SEQUENCE [LARGE SCALE GENOMIC DNA]</scope>
    <source>
        <strain>ATCC 15697 / DSM 20088 / JCM 1222 / NCTC 11817 / S12</strain>
    </source>
</reference>
<reference key="2">
    <citation type="journal article" date="2011" name="Nature">
        <title>Bifidobacteria can protect from enteropathogenic infection through production of acetate.</title>
        <authorList>
            <person name="Fukuda S."/>
            <person name="Toh H."/>
            <person name="Hase K."/>
            <person name="Oshima K."/>
            <person name="Nakanishi Y."/>
            <person name="Yoshimura K."/>
            <person name="Tobe T."/>
            <person name="Clarke J.M."/>
            <person name="Topping D.L."/>
            <person name="Suzuki T."/>
            <person name="Taylor T.D."/>
            <person name="Itoh K."/>
            <person name="Kikuchi J."/>
            <person name="Morita H."/>
            <person name="Hattori M."/>
            <person name="Ohno H."/>
        </authorList>
    </citation>
    <scope>NUCLEOTIDE SEQUENCE [LARGE SCALE GENOMIC DNA]</scope>
    <source>
        <strain>ATCC 15697 / DSM 20088 / JCM 1222 / NCTC 11817 / S12</strain>
    </source>
</reference>
<comment type="function">
    <text evidence="1">Catalyzes the reversible conversion of 2-phosphoglycerate (2-PG) into phosphoenolpyruvate (PEP). It is essential for the degradation of carbohydrates via glycolysis.</text>
</comment>
<comment type="catalytic activity">
    <reaction evidence="1">
        <text>(2R)-2-phosphoglycerate = phosphoenolpyruvate + H2O</text>
        <dbReference type="Rhea" id="RHEA:10164"/>
        <dbReference type="ChEBI" id="CHEBI:15377"/>
        <dbReference type="ChEBI" id="CHEBI:58289"/>
        <dbReference type="ChEBI" id="CHEBI:58702"/>
        <dbReference type="EC" id="4.2.1.11"/>
    </reaction>
</comment>
<comment type="cofactor">
    <cofactor evidence="1">
        <name>Mg(2+)</name>
        <dbReference type="ChEBI" id="CHEBI:18420"/>
    </cofactor>
    <text evidence="1">Binds a second Mg(2+) ion via substrate during catalysis.</text>
</comment>
<comment type="pathway">
    <text evidence="1">Carbohydrate degradation; glycolysis; pyruvate from D-glyceraldehyde 3-phosphate: step 4/5.</text>
</comment>
<comment type="subcellular location">
    <subcellularLocation>
        <location evidence="1">Cytoplasm</location>
    </subcellularLocation>
    <subcellularLocation>
        <location evidence="1">Secreted</location>
    </subcellularLocation>
    <subcellularLocation>
        <location evidence="1">Cell surface</location>
    </subcellularLocation>
    <text evidence="1">Fractions of enolase are present in both the cytoplasm and on the cell surface.</text>
</comment>
<comment type="similarity">
    <text evidence="1">Belongs to the enolase family.</text>
</comment>
<feature type="chain" id="PRO_1000132986" description="Enolase">
    <location>
        <begin position="1"/>
        <end position="432"/>
    </location>
</feature>
<feature type="active site" description="Proton donor" evidence="1">
    <location>
        <position position="205"/>
    </location>
</feature>
<feature type="active site" description="Proton acceptor" evidence="1">
    <location>
        <position position="337"/>
    </location>
</feature>
<feature type="binding site" evidence="1">
    <location>
        <position position="163"/>
    </location>
    <ligand>
        <name>(2R)-2-phosphoglycerate</name>
        <dbReference type="ChEBI" id="CHEBI:58289"/>
    </ligand>
</feature>
<feature type="binding site" evidence="1">
    <location>
        <position position="242"/>
    </location>
    <ligand>
        <name>Mg(2+)</name>
        <dbReference type="ChEBI" id="CHEBI:18420"/>
    </ligand>
</feature>
<feature type="binding site" evidence="1">
    <location>
        <position position="285"/>
    </location>
    <ligand>
        <name>Mg(2+)</name>
        <dbReference type="ChEBI" id="CHEBI:18420"/>
    </ligand>
</feature>
<feature type="binding site" evidence="1">
    <location>
        <position position="312"/>
    </location>
    <ligand>
        <name>Mg(2+)</name>
        <dbReference type="ChEBI" id="CHEBI:18420"/>
    </ligand>
</feature>
<feature type="binding site" evidence="1">
    <location>
        <position position="337"/>
    </location>
    <ligand>
        <name>(2R)-2-phosphoglycerate</name>
        <dbReference type="ChEBI" id="CHEBI:58289"/>
    </ligand>
</feature>
<feature type="binding site" evidence="1">
    <location>
        <position position="366"/>
    </location>
    <ligand>
        <name>(2R)-2-phosphoglycerate</name>
        <dbReference type="ChEBI" id="CHEBI:58289"/>
    </ligand>
</feature>
<feature type="binding site" evidence="1">
    <location>
        <position position="367"/>
    </location>
    <ligand>
        <name>(2R)-2-phosphoglycerate</name>
        <dbReference type="ChEBI" id="CHEBI:58289"/>
    </ligand>
</feature>
<feature type="binding site" evidence="1">
    <location>
        <position position="388"/>
    </location>
    <ligand>
        <name>(2R)-2-phosphoglycerate</name>
        <dbReference type="ChEBI" id="CHEBI:58289"/>
    </ligand>
</feature>
<evidence type="ECO:0000255" key="1">
    <source>
        <dbReference type="HAMAP-Rule" id="MF_00318"/>
    </source>
</evidence>
<sequence>MAVIESVYARQILDSRGNPTVEVYLETEDGAQGKGLVPSGASTGEAEAWERRDGDKSVYGGKGVLNAVKAVNEVIAPKVIGMDAADQRALDDLMIELDGTPNKGKLGANAILGVSLAALYASAESAGLPLYRYIGGTNGHILPVPNMNIMNGGAHADFATDIQEYMISPYGFDTYSEALRAGVEVYHTLKNVLKKEGLNTGLGDEGGFAPKMKSNEDSLKYIMDAISAAGYEPGKQIGICLDVASSEFYNKETGKYRFDGEERDSAYMLDYYENLINEYPIVSIEDPFNEEGWEDWAAITARLGDRLQFVGDDLLVTNPARLQKAIDLGAANSLLVKLNQIGSVTETLDAIELATANGYTSMVSHRSGETPDTTISDLAVAKNTRQIKTGAPARGERVAKYNRLLEIEEELGSTAQYAGYTAFKACKKYLAK</sequence>
<dbReference type="EC" id="4.2.1.11" evidence="1"/>
<dbReference type="EMBL" id="CP001095">
    <property type="protein sequence ID" value="ACJ52911.1"/>
    <property type="molecule type" value="Genomic_DNA"/>
</dbReference>
<dbReference type="EMBL" id="AP010889">
    <property type="protein sequence ID" value="BAJ69480.1"/>
    <property type="molecule type" value="Genomic_DNA"/>
</dbReference>
<dbReference type="RefSeq" id="WP_012578127.1">
    <property type="nucleotide sequence ID" value="NC_011593.1"/>
</dbReference>
<dbReference type="SMR" id="B7GTK2"/>
<dbReference type="MoonProt" id="B7GTK2"/>
<dbReference type="KEGG" id="bln:Blon_1836"/>
<dbReference type="KEGG" id="blon:BLIJ_1901"/>
<dbReference type="PATRIC" id="fig|391904.8.peg.1908"/>
<dbReference type="HOGENOM" id="CLU_031223_2_1_11"/>
<dbReference type="UniPathway" id="UPA00109">
    <property type="reaction ID" value="UER00187"/>
</dbReference>
<dbReference type="Proteomes" id="UP000001360">
    <property type="component" value="Chromosome"/>
</dbReference>
<dbReference type="GO" id="GO:0009986">
    <property type="term" value="C:cell surface"/>
    <property type="evidence" value="ECO:0007669"/>
    <property type="project" value="UniProtKB-SubCell"/>
</dbReference>
<dbReference type="GO" id="GO:0005576">
    <property type="term" value="C:extracellular region"/>
    <property type="evidence" value="ECO:0007669"/>
    <property type="project" value="UniProtKB-SubCell"/>
</dbReference>
<dbReference type="GO" id="GO:0009274">
    <property type="term" value="C:peptidoglycan-based cell wall"/>
    <property type="evidence" value="ECO:0000314"/>
    <property type="project" value="CAFA"/>
</dbReference>
<dbReference type="GO" id="GO:0000015">
    <property type="term" value="C:phosphopyruvate hydratase complex"/>
    <property type="evidence" value="ECO:0007669"/>
    <property type="project" value="InterPro"/>
</dbReference>
<dbReference type="GO" id="GO:0000287">
    <property type="term" value="F:magnesium ion binding"/>
    <property type="evidence" value="ECO:0007669"/>
    <property type="project" value="UniProtKB-UniRule"/>
</dbReference>
<dbReference type="GO" id="GO:0004634">
    <property type="term" value="F:phosphopyruvate hydratase activity"/>
    <property type="evidence" value="ECO:0007669"/>
    <property type="project" value="UniProtKB-UniRule"/>
</dbReference>
<dbReference type="GO" id="GO:0002020">
    <property type="term" value="F:protease binding"/>
    <property type="evidence" value="ECO:0000353"/>
    <property type="project" value="CAFA"/>
</dbReference>
<dbReference type="GO" id="GO:0006096">
    <property type="term" value="P:glycolytic process"/>
    <property type="evidence" value="ECO:0007669"/>
    <property type="project" value="UniProtKB-UniRule"/>
</dbReference>
<dbReference type="CDD" id="cd03313">
    <property type="entry name" value="enolase"/>
    <property type="match status" value="1"/>
</dbReference>
<dbReference type="FunFam" id="3.20.20.120:FF:000001">
    <property type="entry name" value="Enolase"/>
    <property type="match status" value="1"/>
</dbReference>
<dbReference type="FunFam" id="3.30.390.10:FF:000001">
    <property type="entry name" value="Enolase"/>
    <property type="match status" value="1"/>
</dbReference>
<dbReference type="Gene3D" id="3.20.20.120">
    <property type="entry name" value="Enolase-like C-terminal domain"/>
    <property type="match status" value="1"/>
</dbReference>
<dbReference type="Gene3D" id="3.30.390.10">
    <property type="entry name" value="Enolase-like, N-terminal domain"/>
    <property type="match status" value="1"/>
</dbReference>
<dbReference type="HAMAP" id="MF_00318">
    <property type="entry name" value="Enolase"/>
    <property type="match status" value="1"/>
</dbReference>
<dbReference type="InterPro" id="IPR000941">
    <property type="entry name" value="Enolase"/>
</dbReference>
<dbReference type="InterPro" id="IPR036849">
    <property type="entry name" value="Enolase-like_C_sf"/>
</dbReference>
<dbReference type="InterPro" id="IPR029017">
    <property type="entry name" value="Enolase-like_N"/>
</dbReference>
<dbReference type="InterPro" id="IPR020810">
    <property type="entry name" value="Enolase_C"/>
</dbReference>
<dbReference type="InterPro" id="IPR020809">
    <property type="entry name" value="Enolase_CS"/>
</dbReference>
<dbReference type="InterPro" id="IPR020811">
    <property type="entry name" value="Enolase_N"/>
</dbReference>
<dbReference type="NCBIfam" id="TIGR01060">
    <property type="entry name" value="eno"/>
    <property type="match status" value="1"/>
</dbReference>
<dbReference type="PANTHER" id="PTHR11902">
    <property type="entry name" value="ENOLASE"/>
    <property type="match status" value="1"/>
</dbReference>
<dbReference type="PANTHER" id="PTHR11902:SF1">
    <property type="entry name" value="ENOLASE"/>
    <property type="match status" value="1"/>
</dbReference>
<dbReference type="Pfam" id="PF00113">
    <property type="entry name" value="Enolase_C"/>
    <property type="match status" value="1"/>
</dbReference>
<dbReference type="Pfam" id="PF03952">
    <property type="entry name" value="Enolase_N"/>
    <property type="match status" value="1"/>
</dbReference>
<dbReference type="PIRSF" id="PIRSF001400">
    <property type="entry name" value="Enolase"/>
    <property type="match status" value="1"/>
</dbReference>
<dbReference type="PRINTS" id="PR00148">
    <property type="entry name" value="ENOLASE"/>
</dbReference>
<dbReference type="SFLD" id="SFLDF00002">
    <property type="entry name" value="enolase"/>
    <property type="match status" value="1"/>
</dbReference>
<dbReference type="SFLD" id="SFLDG00178">
    <property type="entry name" value="enolase"/>
    <property type="match status" value="1"/>
</dbReference>
<dbReference type="SMART" id="SM01192">
    <property type="entry name" value="Enolase_C"/>
    <property type="match status" value="1"/>
</dbReference>
<dbReference type="SMART" id="SM01193">
    <property type="entry name" value="Enolase_N"/>
    <property type="match status" value="1"/>
</dbReference>
<dbReference type="SUPFAM" id="SSF51604">
    <property type="entry name" value="Enolase C-terminal domain-like"/>
    <property type="match status" value="1"/>
</dbReference>
<dbReference type="SUPFAM" id="SSF54826">
    <property type="entry name" value="Enolase N-terminal domain-like"/>
    <property type="match status" value="1"/>
</dbReference>
<dbReference type="PROSITE" id="PS00164">
    <property type="entry name" value="ENOLASE"/>
    <property type="match status" value="1"/>
</dbReference>
<organism>
    <name type="scientific">Bifidobacterium longum subsp. infantis (strain ATCC 15697 / DSM 20088 / JCM 1222 / NCTC 11817 / S12)</name>
    <dbReference type="NCBI Taxonomy" id="391904"/>
    <lineage>
        <taxon>Bacteria</taxon>
        <taxon>Bacillati</taxon>
        <taxon>Actinomycetota</taxon>
        <taxon>Actinomycetes</taxon>
        <taxon>Bifidobacteriales</taxon>
        <taxon>Bifidobacteriaceae</taxon>
        <taxon>Bifidobacterium</taxon>
    </lineage>
</organism>
<gene>
    <name evidence="1" type="primary">eno</name>
    <name type="ordered locus">Blon_1836</name>
    <name type="ordered locus">BLIJ_1901</name>
</gene>
<keyword id="KW-0963">Cytoplasm</keyword>
<keyword id="KW-0324">Glycolysis</keyword>
<keyword id="KW-0456">Lyase</keyword>
<keyword id="KW-0460">Magnesium</keyword>
<keyword id="KW-0479">Metal-binding</keyword>
<keyword id="KW-0964">Secreted</keyword>
<name>ENO_BIFLS</name>
<accession>B7GTK2</accession>
<accession>E8MLQ3</accession>
<proteinExistence type="inferred from homology"/>